<gene>
    <name evidence="1" type="primary">rplO</name>
    <name type="ordered locus">ACP_1432</name>
</gene>
<protein>
    <recommendedName>
        <fullName evidence="1">Large ribosomal subunit protein uL15</fullName>
    </recommendedName>
    <alternativeName>
        <fullName evidence="3">50S ribosomal protein L15</fullName>
    </alternativeName>
</protein>
<feature type="chain" id="PRO_1000166267" description="Large ribosomal subunit protein uL15">
    <location>
        <begin position="1"/>
        <end position="146"/>
    </location>
</feature>
<feature type="region of interest" description="Disordered" evidence="2">
    <location>
        <begin position="1"/>
        <end position="58"/>
    </location>
</feature>
<feature type="compositionally biased region" description="Basic residues" evidence="2">
    <location>
        <begin position="8"/>
        <end position="20"/>
    </location>
</feature>
<feature type="compositionally biased region" description="Basic residues" evidence="2">
    <location>
        <begin position="30"/>
        <end position="39"/>
    </location>
</feature>
<feature type="compositionally biased region" description="Low complexity" evidence="2">
    <location>
        <begin position="40"/>
        <end position="49"/>
    </location>
</feature>
<comment type="function">
    <text evidence="1">Binds to the 23S rRNA.</text>
</comment>
<comment type="subunit">
    <text evidence="1">Part of the 50S ribosomal subunit.</text>
</comment>
<comment type="similarity">
    <text evidence="1">Belongs to the universal ribosomal protein uL15 family.</text>
</comment>
<keyword id="KW-1185">Reference proteome</keyword>
<keyword id="KW-0687">Ribonucleoprotein</keyword>
<keyword id="KW-0689">Ribosomal protein</keyword>
<keyword id="KW-0694">RNA-binding</keyword>
<keyword id="KW-0699">rRNA-binding</keyword>
<sequence>MNLSNLRAPKKANRNRKRVGRGMGSGHGKTSTRGHKGQRSRSGSRSMRGFEGGQMPLHRRLPKRGFTNIFRTEYTVLNLSRLAELNETELTIDAFIAKGLLDKRNGLLKILGNGELTTAITVHAHKFSKSAQEKIEKVGGKAILVA</sequence>
<reference key="1">
    <citation type="journal article" date="2009" name="Appl. Environ. Microbiol.">
        <title>Three genomes from the phylum Acidobacteria provide insight into the lifestyles of these microorganisms in soils.</title>
        <authorList>
            <person name="Ward N.L."/>
            <person name="Challacombe J.F."/>
            <person name="Janssen P.H."/>
            <person name="Henrissat B."/>
            <person name="Coutinho P.M."/>
            <person name="Wu M."/>
            <person name="Xie G."/>
            <person name="Haft D.H."/>
            <person name="Sait M."/>
            <person name="Badger J."/>
            <person name="Barabote R.D."/>
            <person name="Bradley B."/>
            <person name="Brettin T.S."/>
            <person name="Brinkac L.M."/>
            <person name="Bruce D."/>
            <person name="Creasy T."/>
            <person name="Daugherty S.C."/>
            <person name="Davidsen T.M."/>
            <person name="DeBoy R.T."/>
            <person name="Detter J.C."/>
            <person name="Dodson R.J."/>
            <person name="Durkin A.S."/>
            <person name="Ganapathy A."/>
            <person name="Gwinn-Giglio M."/>
            <person name="Han C.S."/>
            <person name="Khouri H."/>
            <person name="Kiss H."/>
            <person name="Kothari S.P."/>
            <person name="Madupu R."/>
            <person name="Nelson K.E."/>
            <person name="Nelson W.C."/>
            <person name="Paulsen I."/>
            <person name="Penn K."/>
            <person name="Ren Q."/>
            <person name="Rosovitz M.J."/>
            <person name="Selengut J.D."/>
            <person name="Shrivastava S."/>
            <person name="Sullivan S.A."/>
            <person name="Tapia R."/>
            <person name="Thompson L.S."/>
            <person name="Watkins K.L."/>
            <person name="Yang Q."/>
            <person name="Yu C."/>
            <person name="Zafar N."/>
            <person name="Zhou L."/>
            <person name="Kuske C.R."/>
        </authorList>
    </citation>
    <scope>NUCLEOTIDE SEQUENCE [LARGE SCALE GENOMIC DNA]</scope>
    <source>
        <strain>ATCC 51196 / DSM 11244 / BCRC 80197 / JCM 7670 / NBRC 15755 / NCIMB 13165 / 161</strain>
    </source>
</reference>
<dbReference type="EMBL" id="CP001472">
    <property type="protein sequence ID" value="ACO31457.1"/>
    <property type="molecule type" value="Genomic_DNA"/>
</dbReference>
<dbReference type="RefSeq" id="WP_015896565.1">
    <property type="nucleotide sequence ID" value="NC_012483.1"/>
</dbReference>
<dbReference type="SMR" id="C1F623"/>
<dbReference type="FunCoup" id="C1F623">
    <property type="interactions" value="619"/>
</dbReference>
<dbReference type="STRING" id="240015.ACP_1432"/>
<dbReference type="KEGG" id="aca:ACP_1432"/>
<dbReference type="eggNOG" id="COG0200">
    <property type="taxonomic scope" value="Bacteria"/>
</dbReference>
<dbReference type="HOGENOM" id="CLU_055188_4_2_0"/>
<dbReference type="InParanoid" id="C1F623"/>
<dbReference type="OrthoDB" id="9810293at2"/>
<dbReference type="Proteomes" id="UP000002207">
    <property type="component" value="Chromosome"/>
</dbReference>
<dbReference type="GO" id="GO:0022625">
    <property type="term" value="C:cytosolic large ribosomal subunit"/>
    <property type="evidence" value="ECO:0007669"/>
    <property type="project" value="TreeGrafter"/>
</dbReference>
<dbReference type="GO" id="GO:0019843">
    <property type="term" value="F:rRNA binding"/>
    <property type="evidence" value="ECO:0007669"/>
    <property type="project" value="UniProtKB-UniRule"/>
</dbReference>
<dbReference type="GO" id="GO:0003735">
    <property type="term" value="F:structural constituent of ribosome"/>
    <property type="evidence" value="ECO:0007669"/>
    <property type="project" value="InterPro"/>
</dbReference>
<dbReference type="GO" id="GO:0006412">
    <property type="term" value="P:translation"/>
    <property type="evidence" value="ECO:0007669"/>
    <property type="project" value="UniProtKB-UniRule"/>
</dbReference>
<dbReference type="Gene3D" id="3.100.10.10">
    <property type="match status" value="1"/>
</dbReference>
<dbReference type="HAMAP" id="MF_01341">
    <property type="entry name" value="Ribosomal_uL15"/>
    <property type="match status" value="1"/>
</dbReference>
<dbReference type="InterPro" id="IPR030878">
    <property type="entry name" value="Ribosomal_uL15"/>
</dbReference>
<dbReference type="InterPro" id="IPR021131">
    <property type="entry name" value="Ribosomal_uL15/eL18"/>
</dbReference>
<dbReference type="InterPro" id="IPR036227">
    <property type="entry name" value="Ribosomal_uL15/eL18_sf"/>
</dbReference>
<dbReference type="InterPro" id="IPR005749">
    <property type="entry name" value="Ribosomal_uL15_bac-type"/>
</dbReference>
<dbReference type="InterPro" id="IPR001196">
    <property type="entry name" value="Ribosomal_uL15_CS"/>
</dbReference>
<dbReference type="NCBIfam" id="TIGR01071">
    <property type="entry name" value="rplO_bact"/>
    <property type="match status" value="1"/>
</dbReference>
<dbReference type="PANTHER" id="PTHR12934">
    <property type="entry name" value="50S RIBOSOMAL PROTEIN L15"/>
    <property type="match status" value="1"/>
</dbReference>
<dbReference type="PANTHER" id="PTHR12934:SF11">
    <property type="entry name" value="LARGE RIBOSOMAL SUBUNIT PROTEIN UL15M"/>
    <property type="match status" value="1"/>
</dbReference>
<dbReference type="Pfam" id="PF00828">
    <property type="entry name" value="Ribosomal_L27A"/>
    <property type="match status" value="1"/>
</dbReference>
<dbReference type="SUPFAM" id="SSF52080">
    <property type="entry name" value="Ribosomal proteins L15p and L18e"/>
    <property type="match status" value="1"/>
</dbReference>
<dbReference type="PROSITE" id="PS00475">
    <property type="entry name" value="RIBOSOMAL_L15"/>
    <property type="match status" value="1"/>
</dbReference>
<name>RL15_ACIC5</name>
<evidence type="ECO:0000255" key="1">
    <source>
        <dbReference type="HAMAP-Rule" id="MF_01341"/>
    </source>
</evidence>
<evidence type="ECO:0000256" key="2">
    <source>
        <dbReference type="SAM" id="MobiDB-lite"/>
    </source>
</evidence>
<evidence type="ECO:0000305" key="3"/>
<organism>
    <name type="scientific">Acidobacterium capsulatum (strain ATCC 51196 / DSM 11244 / BCRC 80197 / JCM 7670 / NBRC 15755 / NCIMB 13165 / 161)</name>
    <dbReference type="NCBI Taxonomy" id="240015"/>
    <lineage>
        <taxon>Bacteria</taxon>
        <taxon>Pseudomonadati</taxon>
        <taxon>Acidobacteriota</taxon>
        <taxon>Terriglobia</taxon>
        <taxon>Terriglobales</taxon>
        <taxon>Acidobacteriaceae</taxon>
        <taxon>Acidobacterium</taxon>
    </lineage>
</organism>
<proteinExistence type="inferred from homology"/>
<accession>C1F623</accession>